<reference key="1">
    <citation type="journal article" date="2004" name="Nucleic Acids Res.">
        <title>Genome sequence of Symbiobacterium thermophilum, an uncultivable bacterium that depends on microbial commensalism.</title>
        <authorList>
            <person name="Ueda K."/>
            <person name="Yamashita A."/>
            <person name="Ishikawa J."/>
            <person name="Shimada M."/>
            <person name="Watsuji T."/>
            <person name="Morimura K."/>
            <person name="Ikeda H."/>
            <person name="Hattori M."/>
            <person name="Beppu T."/>
        </authorList>
    </citation>
    <scope>NUCLEOTIDE SEQUENCE [LARGE SCALE GENOMIC DNA]</scope>
    <source>
        <strain>DSM 24528 / JCM 14929 / IAM 14863 / T</strain>
    </source>
</reference>
<feature type="chain" id="PRO_0000345914" description="tRNA modification GTPase MnmE">
    <location>
        <begin position="1"/>
        <end position="457"/>
    </location>
</feature>
<feature type="domain" description="TrmE-type G">
    <location>
        <begin position="221"/>
        <end position="381"/>
    </location>
</feature>
<feature type="binding site" evidence="1">
    <location>
        <position position="22"/>
    </location>
    <ligand>
        <name>(6S)-5-formyl-5,6,7,8-tetrahydrofolate</name>
        <dbReference type="ChEBI" id="CHEBI:57457"/>
    </ligand>
</feature>
<feature type="binding site" evidence="1">
    <location>
        <position position="86"/>
    </location>
    <ligand>
        <name>(6S)-5-formyl-5,6,7,8-tetrahydrofolate</name>
        <dbReference type="ChEBI" id="CHEBI:57457"/>
    </ligand>
</feature>
<feature type="binding site" evidence="1">
    <location>
        <position position="125"/>
    </location>
    <ligand>
        <name>(6S)-5-formyl-5,6,7,8-tetrahydrofolate</name>
        <dbReference type="ChEBI" id="CHEBI:57457"/>
    </ligand>
</feature>
<feature type="binding site" evidence="1">
    <location>
        <begin position="231"/>
        <end position="236"/>
    </location>
    <ligand>
        <name>GTP</name>
        <dbReference type="ChEBI" id="CHEBI:37565"/>
    </ligand>
</feature>
<feature type="binding site" evidence="1">
    <location>
        <position position="231"/>
    </location>
    <ligand>
        <name>K(+)</name>
        <dbReference type="ChEBI" id="CHEBI:29103"/>
    </ligand>
</feature>
<feature type="binding site" evidence="1">
    <location>
        <position position="235"/>
    </location>
    <ligand>
        <name>Mg(2+)</name>
        <dbReference type="ChEBI" id="CHEBI:18420"/>
    </ligand>
</feature>
<feature type="binding site" evidence="1">
    <location>
        <begin position="250"/>
        <end position="256"/>
    </location>
    <ligand>
        <name>GTP</name>
        <dbReference type="ChEBI" id="CHEBI:37565"/>
    </ligand>
</feature>
<feature type="binding site" evidence="1">
    <location>
        <position position="250"/>
    </location>
    <ligand>
        <name>K(+)</name>
        <dbReference type="ChEBI" id="CHEBI:29103"/>
    </ligand>
</feature>
<feature type="binding site" evidence="1">
    <location>
        <position position="252"/>
    </location>
    <ligand>
        <name>K(+)</name>
        <dbReference type="ChEBI" id="CHEBI:29103"/>
    </ligand>
</feature>
<feature type="binding site" evidence="1">
    <location>
        <position position="255"/>
    </location>
    <ligand>
        <name>K(+)</name>
        <dbReference type="ChEBI" id="CHEBI:29103"/>
    </ligand>
</feature>
<feature type="binding site" evidence="1">
    <location>
        <position position="256"/>
    </location>
    <ligand>
        <name>Mg(2+)</name>
        <dbReference type="ChEBI" id="CHEBI:18420"/>
    </ligand>
</feature>
<feature type="binding site" evidence="1">
    <location>
        <begin position="275"/>
        <end position="278"/>
    </location>
    <ligand>
        <name>GTP</name>
        <dbReference type="ChEBI" id="CHEBI:37565"/>
    </ligand>
</feature>
<feature type="binding site" evidence="1">
    <location>
        <position position="457"/>
    </location>
    <ligand>
        <name>(6S)-5-formyl-5,6,7,8-tetrahydrofolate</name>
        <dbReference type="ChEBI" id="CHEBI:57457"/>
    </ligand>
</feature>
<gene>
    <name evidence="1" type="primary">mnmE</name>
    <name evidence="1" type="synonym">trmE</name>
    <name type="ordered locus">STH3336</name>
</gene>
<protein>
    <recommendedName>
        <fullName evidence="1">tRNA modification GTPase MnmE</fullName>
        <ecNumber evidence="1">3.6.-.-</ecNumber>
    </recommendedName>
</protein>
<evidence type="ECO:0000255" key="1">
    <source>
        <dbReference type="HAMAP-Rule" id="MF_00379"/>
    </source>
</evidence>
<evidence type="ECO:0000305" key="2"/>
<proteinExistence type="inferred from homology"/>
<organism>
    <name type="scientific">Symbiobacterium thermophilum (strain DSM 24528 / JCM 14929 / IAM 14863 / T)</name>
    <dbReference type="NCBI Taxonomy" id="292459"/>
    <lineage>
        <taxon>Bacteria</taxon>
        <taxon>Bacillati</taxon>
        <taxon>Bacillota</taxon>
        <taxon>Clostridia</taxon>
        <taxon>Eubacteriales</taxon>
        <taxon>Symbiobacteriaceae</taxon>
        <taxon>Symbiobacterium</taxon>
    </lineage>
</organism>
<accession>Q67J33</accession>
<sequence>MGEETIAAIATGAGEGGIGIVRISGADALQVAERIFRPRRGRPLGCRRSHTVTYGWVVTPGGDRIDEALALVMRGPHSYTGEDVVELQCHGGQLAVRRVLEQALQAGARLAEPGEFTRRAFLNGRLDLSQAEAVVDLIRAKTDRAMAAAVAHLRGSLRQAIGRIRERLMEMMAHLEADIDFPELELEVQTREEVAAGCAWCLGEVERLLGGARTGRILREGLRAVLAGRPNVGKSSLLNRLVRENRAIVTPIPGTTRDVIAEWVELGGVPVQLFDTAGLRPTDDPVERIGVARTHEALAQAHLVLVVVDAAAGLGPEDREWISQLPQGAARVGVANKIDLNPAFELSALREALGGAPVVGVSAETGEGFDALEAEVARVAGAFDASEELLVNARQAEAIRRARNHLRDAQATLESGLGDELVAIDLRAAWMALGEVTGETAGEELLDQIFSRFCIGK</sequence>
<comment type="function">
    <text evidence="1">Exhibits a very high intrinsic GTPase hydrolysis rate. Involved in the addition of a carboxymethylaminomethyl (cmnm) group at the wobble position (U34) of certain tRNAs, forming tRNA-cmnm(5)s(2)U34.</text>
</comment>
<comment type="cofactor">
    <cofactor evidence="1">
        <name>K(+)</name>
        <dbReference type="ChEBI" id="CHEBI:29103"/>
    </cofactor>
    <text evidence="1">Binds 1 potassium ion per subunit.</text>
</comment>
<comment type="subunit">
    <text evidence="1">Homodimer. Heterotetramer of two MnmE and two MnmG subunits.</text>
</comment>
<comment type="subcellular location">
    <subcellularLocation>
        <location evidence="1">Cytoplasm</location>
    </subcellularLocation>
</comment>
<comment type="similarity">
    <text evidence="1">Belongs to the TRAFAC class TrmE-Era-EngA-EngB-Septin-like GTPase superfamily. TrmE GTPase family.</text>
</comment>
<comment type="sequence caution" evidence="2">
    <conflict type="erroneous initiation">
        <sequence resource="EMBL-CDS" id="BAD42317"/>
    </conflict>
</comment>
<dbReference type="EC" id="3.6.-.-" evidence="1"/>
<dbReference type="EMBL" id="AP006840">
    <property type="protein sequence ID" value="BAD42317.1"/>
    <property type="status" value="ALT_INIT"/>
    <property type="molecule type" value="Genomic_DNA"/>
</dbReference>
<dbReference type="RefSeq" id="WP_011197447.1">
    <property type="nucleotide sequence ID" value="NC_006177.1"/>
</dbReference>
<dbReference type="SMR" id="Q67J33"/>
<dbReference type="STRING" id="292459.STH3336"/>
<dbReference type="KEGG" id="sth:STH3336"/>
<dbReference type="eggNOG" id="COG0486">
    <property type="taxonomic scope" value="Bacteria"/>
</dbReference>
<dbReference type="HOGENOM" id="CLU_019624_4_1_9"/>
<dbReference type="OrthoDB" id="9805918at2"/>
<dbReference type="Proteomes" id="UP000000417">
    <property type="component" value="Chromosome"/>
</dbReference>
<dbReference type="GO" id="GO:0005829">
    <property type="term" value="C:cytosol"/>
    <property type="evidence" value="ECO:0007669"/>
    <property type="project" value="TreeGrafter"/>
</dbReference>
<dbReference type="GO" id="GO:0005525">
    <property type="term" value="F:GTP binding"/>
    <property type="evidence" value="ECO:0007669"/>
    <property type="project" value="UniProtKB-UniRule"/>
</dbReference>
<dbReference type="GO" id="GO:0003924">
    <property type="term" value="F:GTPase activity"/>
    <property type="evidence" value="ECO:0007669"/>
    <property type="project" value="UniProtKB-UniRule"/>
</dbReference>
<dbReference type="GO" id="GO:0046872">
    <property type="term" value="F:metal ion binding"/>
    <property type="evidence" value="ECO:0007669"/>
    <property type="project" value="UniProtKB-KW"/>
</dbReference>
<dbReference type="GO" id="GO:0030488">
    <property type="term" value="P:tRNA methylation"/>
    <property type="evidence" value="ECO:0007669"/>
    <property type="project" value="TreeGrafter"/>
</dbReference>
<dbReference type="GO" id="GO:0002098">
    <property type="term" value="P:tRNA wobble uridine modification"/>
    <property type="evidence" value="ECO:0007669"/>
    <property type="project" value="TreeGrafter"/>
</dbReference>
<dbReference type="CDD" id="cd04164">
    <property type="entry name" value="trmE"/>
    <property type="match status" value="1"/>
</dbReference>
<dbReference type="CDD" id="cd14858">
    <property type="entry name" value="TrmE_N"/>
    <property type="match status" value="1"/>
</dbReference>
<dbReference type="FunFam" id="3.30.1360.120:FF:000003">
    <property type="entry name" value="tRNA modification GTPase MnmE"/>
    <property type="match status" value="1"/>
</dbReference>
<dbReference type="Gene3D" id="3.40.50.300">
    <property type="entry name" value="P-loop containing nucleotide triphosphate hydrolases"/>
    <property type="match status" value="1"/>
</dbReference>
<dbReference type="Gene3D" id="3.30.1360.120">
    <property type="entry name" value="Probable tRNA modification gtpase trme, domain 1"/>
    <property type="match status" value="1"/>
</dbReference>
<dbReference type="Gene3D" id="1.20.120.430">
    <property type="entry name" value="tRNA modification GTPase MnmE domain 2"/>
    <property type="match status" value="1"/>
</dbReference>
<dbReference type="HAMAP" id="MF_00379">
    <property type="entry name" value="GTPase_MnmE"/>
    <property type="match status" value="1"/>
</dbReference>
<dbReference type="InterPro" id="IPR031168">
    <property type="entry name" value="G_TrmE"/>
</dbReference>
<dbReference type="InterPro" id="IPR006073">
    <property type="entry name" value="GTP-bd"/>
</dbReference>
<dbReference type="InterPro" id="IPR018948">
    <property type="entry name" value="GTP-bd_TrmE_N"/>
</dbReference>
<dbReference type="InterPro" id="IPR004520">
    <property type="entry name" value="GTPase_MnmE"/>
</dbReference>
<dbReference type="InterPro" id="IPR027368">
    <property type="entry name" value="MnmE_dom2"/>
</dbReference>
<dbReference type="InterPro" id="IPR025867">
    <property type="entry name" value="MnmE_helical"/>
</dbReference>
<dbReference type="InterPro" id="IPR027417">
    <property type="entry name" value="P-loop_NTPase"/>
</dbReference>
<dbReference type="InterPro" id="IPR005225">
    <property type="entry name" value="Small_GTP-bd"/>
</dbReference>
<dbReference type="InterPro" id="IPR027266">
    <property type="entry name" value="TrmE/GcvT_dom1"/>
</dbReference>
<dbReference type="NCBIfam" id="TIGR00450">
    <property type="entry name" value="mnmE_trmE_thdF"/>
    <property type="match status" value="1"/>
</dbReference>
<dbReference type="NCBIfam" id="NF003661">
    <property type="entry name" value="PRK05291.1-3"/>
    <property type="match status" value="1"/>
</dbReference>
<dbReference type="NCBIfam" id="TIGR00231">
    <property type="entry name" value="small_GTP"/>
    <property type="match status" value="1"/>
</dbReference>
<dbReference type="PANTHER" id="PTHR42714">
    <property type="entry name" value="TRNA MODIFICATION GTPASE GTPBP3"/>
    <property type="match status" value="1"/>
</dbReference>
<dbReference type="PANTHER" id="PTHR42714:SF2">
    <property type="entry name" value="TRNA MODIFICATION GTPASE GTPBP3, MITOCHONDRIAL"/>
    <property type="match status" value="1"/>
</dbReference>
<dbReference type="Pfam" id="PF01926">
    <property type="entry name" value="MMR_HSR1"/>
    <property type="match status" value="1"/>
</dbReference>
<dbReference type="Pfam" id="PF12631">
    <property type="entry name" value="MnmE_helical"/>
    <property type="match status" value="1"/>
</dbReference>
<dbReference type="Pfam" id="PF10396">
    <property type="entry name" value="TrmE_N"/>
    <property type="match status" value="1"/>
</dbReference>
<dbReference type="SUPFAM" id="SSF52540">
    <property type="entry name" value="P-loop containing nucleoside triphosphate hydrolases"/>
    <property type="match status" value="1"/>
</dbReference>
<dbReference type="SUPFAM" id="SSF116878">
    <property type="entry name" value="TrmE connector domain"/>
    <property type="match status" value="1"/>
</dbReference>
<dbReference type="PROSITE" id="PS51709">
    <property type="entry name" value="G_TRME"/>
    <property type="match status" value="1"/>
</dbReference>
<keyword id="KW-0963">Cytoplasm</keyword>
<keyword id="KW-0342">GTP-binding</keyword>
<keyword id="KW-0378">Hydrolase</keyword>
<keyword id="KW-0460">Magnesium</keyword>
<keyword id="KW-0479">Metal-binding</keyword>
<keyword id="KW-0547">Nucleotide-binding</keyword>
<keyword id="KW-0630">Potassium</keyword>
<keyword id="KW-1185">Reference proteome</keyword>
<keyword id="KW-0819">tRNA processing</keyword>
<name>MNME_SYMTH</name>